<proteinExistence type="inferred from homology"/>
<organism>
    <name type="scientific">Struthio camelus</name>
    <name type="common">Common ostrich</name>
    <dbReference type="NCBI Taxonomy" id="8801"/>
    <lineage>
        <taxon>Eukaryota</taxon>
        <taxon>Metazoa</taxon>
        <taxon>Chordata</taxon>
        <taxon>Craniata</taxon>
        <taxon>Vertebrata</taxon>
        <taxon>Euteleostomi</taxon>
        <taxon>Archelosauria</taxon>
        <taxon>Archosauria</taxon>
        <taxon>Dinosauria</taxon>
        <taxon>Saurischia</taxon>
        <taxon>Theropoda</taxon>
        <taxon>Coelurosauria</taxon>
        <taxon>Aves</taxon>
        <taxon>Palaeognathae</taxon>
        <taxon>Struthioniformes</taxon>
        <taxon>Struthionidae</taxon>
        <taxon>Struthio</taxon>
    </lineage>
</organism>
<accession>O21398</accession>
<accession>O79100</accession>
<keyword id="KW-0249">Electron transport</keyword>
<keyword id="KW-0472">Membrane</keyword>
<keyword id="KW-0496">Mitochondrion</keyword>
<keyword id="KW-0999">Mitochondrion inner membrane</keyword>
<keyword id="KW-0520">NAD</keyword>
<keyword id="KW-0679">Respiratory chain</keyword>
<keyword id="KW-1278">Translocase</keyword>
<keyword id="KW-0812">Transmembrane</keyword>
<keyword id="KW-1133">Transmembrane helix</keyword>
<keyword id="KW-0813">Transport</keyword>
<keyword id="KW-0830">Ubiquinone</keyword>
<evidence type="ECO:0000250" key="1"/>
<evidence type="ECO:0000255" key="2"/>
<evidence type="ECO:0000305" key="3"/>
<gene>
    <name type="primary">MT-ND2</name>
    <name type="synonym">MTND2</name>
    <name type="synonym">NADH2</name>
    <name type="synonym">ND2</name>
</gene>
<reference key="1">
    <citation type="journal article" date="1997" name="Mol. Biol. Evol.">
        <title>The mtDNA sequence of the ostrich and the divergence between paleognathous and neognathous birds.</title>
        <authorList>
            <person name="Harlid A."/>
            <person name="Janke A."/>
            <person name="Arnason U."/>
        </authorList>
    </citation>
    <scope>NUCLEOTIDE SEQUENCE [GENOMIC DNA]</scope>
</reference>
<reference key="2">
    <citation type="submission" date="1998-06" db="EMBL/GenBank/DDBJ databases">
        <title>Primers for a PCR-based approach to complete mitochondrial genome sequencing.</title>
        <authorList>
            <person name="Sorenson M.D."/>
            <person name="Dimcheff D.E."/>
            <person name="Ast J.C."/>
            <person name="Yuri T."/>
            <person name="Mindell D.P."/>
        </authorList>
    </citation>
    <scope>NUCLEOTIDE SEQUENCE [GENOMIC DNA]</scope>
</reference>
<reference key="3">
    <citation type="journal article" date="2001" name="Proc. R. Soc. B">
        <title>Complete mitochondrial DNA genome sequences of extinct birds: ratite phylogenetics and the vicariance biogeography hypothesis.</title>
        <authorList>
            <person name="Haddrath O."/>
            <person name="Baker A.J."/>
        </authorList>
    </citation>
    <scope>NUCLEOTIDE SEQUENCE [GENOMIC DNA]</scope>
</reference>
<name>NU2M_STRCA</name>
<protein>
    <recommendedName>
        <fullName>NADH-ubiquinone oxidoreductase chain 2</fullName>
        <ecNumber>7.1.1.2</ecNumber>
    </recommendedName>
    <alternativeName>
        <fullName>NADH dehydrogenase subunit 2</fullName>
    </alternativeName>
</protein>
<sequence length="346" mass="37737">MNPHAKLISLISLLLGTTITISSNHWIMAWTGLEINTLAIIPLISKSHHPRAVEASVKYFLVQAAASALVLFSSMSNAWATGQWDITQLTHPTASMLLTAAIAIKLGLVPFHFWFPEVLQGTSLTTALLLSTLMKLPPMAILLMTSPSLNPTVLTSMALASAALGGWMGLNQTQTRKILAFSSIAHLGWMTMIIIYNPKLTLLTFYLYILMTATVFLSLNTTKTLKLSTLMTSWTKAPVLNAALMLTLLSLAGLPPLTGFMPKWLILQELTKQEMTTVATIIALLSLLGLFFYLRLAYYATITLPPNSANHMKQWYISNPTNTSIAILSSLSAILLPISPMILAAL</sequence>
<dbReference type="EC" id="7.1.1.2"/>
<dbReference type="EMBL" id="Y12025">
    <property type="protein sequence ID" value="CAA72745.1"/>
    <property type="molecule type" value="Genomic_DNA"/>
</dbReference>
<dbReference type="EMBL" id="AF069429">
    <property type="protein sequence ID" value="AAD09384.1"/>
    <property type="molecule type" value="Genomic_DNA"/>
</dbReference>
<dbReference type="EMBL" id="AF338715">
    <property type="protein sequence ID" value="AAK53352.1"/>
    <property type="molecule type" value="Genomic_DNA"/>
</dbReference>
<dbReference type="PIR" id="B90612">
    <property type="entry name" value="B90612"/>
</dbReference>
<dbReference type="PIR" id="T12410">
    <property type="entry name" value="T12410"/>
</dbReference>
<dbReference type="RefSeq" id="NP_115442.1">
    <property type="nucleotide sequence ID" value="NC_002785.1"/>
</dbReference>
<dbReference type="SMR" id="O21398"/>
<dbReference type="GeneID" id="803269"/>
<dbReference type="CTD" id="4536"/>
<dbReference type="GO" id="GO:0005743">
    <property type="term" value="C:mitochondrial inner membrane"/>
    <property type="evidence" value="ECO:0007669"/>
    <property type="project" value="UniProtKB-SubCell"/>
</dbReference>
<dbReference type="GO" id="GO:0008137">
    <property type="term" value="F:NADH dehydrogenase (ubiquinone) activity"/>
    <property type="evidence" value="ECO:0007669"/>
    <property type="project" value="UniProtKB-EC"/>
</dbReference>
<dbReference type="GO" id="GO:0006120">
    <property type="term" value="P:mitochondrial electron transport, NADH to ubiquinone"/>
    <property type="evidence" value="ECO:0007669"/>
    <property type="project" value="InterPro"/>
</dbReference>
<dbReference type="InterPro" id="IPR050175">
    <property type="entry name" value="Complex_I_Subunit_2"/>
</dbReference>
<dbReference type="InterPro" id="IPR010933">
    <property type="entry name" value="NADH_DH_su2_C"/>
</dbReference>
<dbReference type="InterPro" id="IPR003917">
    <property type="entry name" value="NADH_UbQ_OxRdtase_chain2"/>
</dbReference>
<dbReference type="InterPro" id="IPR001750">
    <property type="entry name" value="ND/Mrp_TM"/>
</dbReference>
<dbReference type="PANTHER" id="PTHR46552">
    <property type="entry name" value="NADH-UBIQUINONE OXIDOREDUCTASE CHAIN 2"/>
    <property type="match status" value="1"/>
</dbReference>
<dbReference type="PANTHER" id="PTHR46552:SF1">
    <property type="entry name" value="NADH-UBIQUINONE OXIDOREDUCTASE CHAIN 2"/>
    <property type="match status" value="1"/>
</dbReference>
<dbReference type="Pfam" id="PF06444">
    <property type="entry name" value="NADH_dehy_S2_C"/>
    <property type="match status" value="1"/>
</dbReference>
<dbReference type="Pfam" id="PF00361">
    <property type="entry name" value="Proton_antipo_M"/>
    <property type="match status" value="1"/>
</dbReference>
<dbReference type="PRINTS" id="PR01436">
    <property type="entry name" value="NADHDHGNASE2"/>
</dbReference>
<geneLocation type="mitochondrion"/>
<feature type="chain" id="PRO_0000117640" description="NADH-ubiquinone oxidoreductase chain 2">
    <location>
        <begin position="1"/>
        <end position="346"/>
    </location>
</feature>
<feature type="transmembrane region" description="Helical" evidence="2">
    <location>
        <begin position="1"/>
        <end position="21"/>
    </location>
</feature>
<feature type="transmembrane region" description="Helical" evidence="2">
    <location>
        <begin position="25"/>
        <end position="45"/>
    </location>
</feature>
<feature type="transmembrane region" description="Helical" evidence="2">
    <location>
        <begin position="60"/>
        <end position="80"/>
    </location>
</feature>
<feature type="transmembrane region" description="Helical" evidence="2">
    <location>
        <begin position="96"/>
        <end position="116"/>
    </location>
</feature>
<feature type="transmembrane region" description="Helical" evidence="2">
    <location>
        <begin position="124"/>
        <end position="144"/>
    </location>
</feature>
<feature type="transmembrane region" description="Helical" evidence="2">
    <location>
        <begin position="149"/>
        <end position="169"/>
    </location>
</feature>
<feature type="transmembrane region" description="Helical" evidence="2">
    <location>
        <begin position="178"/>
        <end position="198"/>
    </location>
</feature>
<feature type="transmembrane region" description="Helical" evidence="2">
    <location>
        <begin position="200"/>
        <end position="220"/>
    </location>
</feature>
<feature type="transmembrane region" description="Helical" evidence="2">
    <location>
        <begin position="242"/>
        <end position="262"/>
    </location>
</feature>
<feature type="transmembrane region" description="Helical" evidence="2">
    <location>
        <begin position="274"/>
        <end position="294"/>
    </location>
</feature>
<feature type="transmembrane region" description="Helical" evidence="2">
    <location>
        <begin position="325"/>
        <end position="345"/>
    </location>
</feature>
<feature type="sequence conflict" description="In Ref. 1; CAA72745." evidence="3" ref="1">
    <original>A</original>
    <variation>T</variation>
    <location>
        <position position="213"/>
    </location>
</feature>
<comment type="function">
    <text evidence="1">Core subunit of the mitochondrial membrane respiratory chain NADH dehydrogenase (Complex I) that is believed to belong to the minimal assembly required for catalysis. Complex I functions in the transfer of electrons from NADH to the respiratory chain. The immediate electron acceptor for the enzyme is believed to be ubiquinone (By similarity).</text>
</comment>
<comment type="catalytic activity">
    <reaction>
        <text>a ubiquinone + NADH + 5 H(+)(in) = a ubiquinol + NAD(+) + 4 H(+)(out)</text>
        <dbReference type="Rhea" id="RHEA:29091"/>
        <dbReference type="Rhea" id="RHEA-COMP:9565"/>
        <dbReference type="Rhea" id="RHEA-COMP:9566"/>
        <dbReference type="ChEBI" id="CHEBI:15378"/>
        <dbReference type="ChEBI" id="CHEBI:16389"/>
        <dbReference type="ChEBI" id="CHEBI:17976"/>
        <dbReference type="ChEBI" id="CHEBI:57540"/>
        <dbReference type="ChEBI" id="CHEBI:57945"/>
        <dbReference type="EC" id="7.1.1.2"/>
    </reaction>
</comment>
<comment type="subcellular location">
    <subcellularLocation>
        <location>Mitochondrion inner membrane</location>
        <topology>Multi-pass membrane protein</topology>
    </subcellularLocation>
</comment>
<comment type="similarity">
    <text evidence="3">Belongs to the complex I subunit 2 family.</text>
</comment>